<evidence type="ECO:0000255" key="1">
    <source>
        <dbReference type="HAMAP-Rule" id="MF_01346"/>
    </source>
</evidence>
<evidence type="ECO:0000305" key="2"/>
<name>ATPA_WHEAT</name>
<proteinExistence type="inferred from homology"/>
<gene>
    <name evidence="1" type="primary">atpA</name>
</gene>
<feature type="chain" id="PRO_0000144394" description="ATP synthase subunit alpha, chloroplastic">
    <location>
        <begin position="1"/>
        <end position="504"/>
    </location>
</feature>
<feature type="binding site" evidence="1">
    <location>
        <begin position="170"/>
        <end position="177"/>
    </location>
    <ligand>
        <name>ATP</name>
        <dbReference type="ChEBI" id="CHEBI:30616"/>
    </ligand>
</feature>
<feature type="site" description="Required for activity" evidence="1">
    <location>
        <position position="363"/>
    </location>
</feature>
<feature type="sequence conflict" description="In Ref. 1; AAA84725." evidence="2" ref="1">
    <original>L</original>
    <variation>V</variation>
    <location>
        <position position="13"/>
    </location>
</feature>
<feature type="sequence conflict" description="In Ref. 1; AAA84725." evidence="2" ref="1">
    <original>R</original>
    <variation>L</variation>
    <location>
        <position position="16"/>
    </location>
</feature>
<feature type="sequence conflict" description="In Ref. 1; AAA84725." evidence="2" ref="1">
    <original>A</original>
    <variation>P</variation>
    <location>
        <position position="96"/>
    </location>
</feature>
<accession>P12112</accession>
<organism>
    <name type="scientific">Triticum aestivum</name>
    <name type="common">Wheat</name>
    <dbReference type="NCBI Taxonomy" id="4565"/>
    <lineage>
        <taxon>Eukaryota</taxon>
        <taxon>Viridiplantae</taxon>
        <taxon>Streptophyta</taxon>
        <taxon>Embryophyta</taxon>
        <taxon>Tracheophyta</taxon>
        <taxon>Spermatophyta</taxon>
        <taxon>Magnoliopsida</taxon>
        <taxon>Liliopsida</taxon>
        <taxon>Poales</taxon>
        <taxon>Poaceae</taxon>
        <taxon>BOP clade</taxon>
        <taxon>Pooideae</taxon>
        <taxon>Triticodae</taxon>
        <taxon>Triticeae</taxon>
        <taxon>Triticinae</taxon>
        <taxon>Triticum</taxon>
    </lineage>
</organism>
<protein>
    <recommendedName>
        <fullName evidence="1">ATP synthase subunit alpha, chloroplastic</fullName>
        <ecNumber evidence="1">7.1.2.2</ecNumber>
    </recommendedName>
    <alternativeName>
        <fullName evidence="1">ATP synthase F1 sector subunit alpha</fullName>
    </alternativeName>
    <alternativeName>
        <fullName evidence="1">F-ATPase subunit alpha</fullName>
    </alternativeName>
</protein>
<geneLocation type="chloroplast"/>
<reference key="1">
    <citation type="journal article" date="1985" name="Plant Mol. Biol.">
        <title>Nucleotide sequences of the genes for the alpha, beta and epsilon subunits of wheat chloroplast ATP synthase.</title>
        <authorList>
            <person name="Howe C.J."/>
            <person name="Fearnley I.M."/>
            <person name="Walker J.E."/>
            <person name="Dyer T.A."/>
            <person name="Gray J.C."/>
        </authorList>
        <dbReference type="AGRICOLA" id="IND85057686"/>
    </citation>
    <scope>NUCLEOTIDE SEQUENCE [GENOMIC DNA]</scope>
</reference>
<reference key="2">
    <citation type="journal article" date="2000" name="Plant Mol. Biol. Rep.">
        <title>Chinese spring wheat (Triticum aestivum L.) chloroplast genome: complete sequence and contig clones.</title>
        <authorList>
            <person name="Ogihara Y."/>
            <person name="Isono K."/>
            <person name="Kojima T."/>
            <person name="Endo A."/>
            <person name="Hanaoka M."/>
            <person name="Shiina T."/>
            <person name="Terachi T."/>
            <person name="Utsugi S."/>
            <person name="Murata M."/>
            <person name="Mori N."/>
            <person name="Takumi S."/>
            <person name="Ikeo K."/>
            <person name="Gojobori T."/>
            <person name="Murai R."/>
            <person name="Murai K."/>
            <person name="Matsuoka Y."/>
            <person name="Ohnishi Y."/>
            <person name="Tajiri H."/>
            <person name="Tsunewaki K."/>
        </authorList>
    </citation>
    <scope>NUCLEOTIDE SEQUENCE [LARGE SCALE GENOMIC DNA]</scope>
    <source>
        <strain>cv. Chinese Spring</strain>
    </source>
</reference>
<keyword id="KW-0066">ATP synthesis</keyword>
<keyword id="KW-0067">ATP-binding</keyword>
<keyword id="KW-0139">CF(1)</keyword>
<keyword id="KW-0150">Chloroplast</keyword>
<keyword id="KW-0375">Hydrogen ion transport</keyword>
<keyword id="KW-0406">Ion transport</keyword>
<keyword id="KW-0472">Membrane</keyword>
<keyword id="KW-0547">Nucleotide-binding</keyword>
<keyword id="KW-0934">Plastid</keyword>
<keyword id="KW-1185">Reference proteome</keyword>
<keyword id="KW-0793">Thylakoid</keyword>
<keyword id="KW-1278">Translocase</keyword>
<keyword id="KW-0813">Transport</keyword>
<sequence length="504" mass="55296">MATLRVDEIHKILRERIEQYNRKVGIENIGRVVQVGDGIARIIGLGEIMSGELVEFAEGTRGIALNLESKNVGIVLMGDGLMIQEGSFVKATGRIAQIPVSEAYLGRVVNALAKPIDGKGEIIASESRLIESPAPSIISRRSVYEPLQTGLIAIDSMIPIGRGQRELIIGDRQTGKTAVATDTILNQKGQGVICVYVAIGQRASSVAQVVTTFHEEGAMEYTIVVAEMADSPATLQYLAPYTGAALAEYFMYRERHTLIIYDDLSKQAQAYRQMSLLLRRPPGREAYPGDVFYLHSRLLERAAKLNSLLGEGSMTALPIVETQSGDVSAYIPTNVISITDGQIFLSADLFNAGIRPAINVGISVSRVGSAAQIKAMKQVAGKSKLELAQFAELQAFAQFASALDKTSQNQLARGRRLRELLKQSQANPLPVEEQIATIYTGTRGYLDSLEIEQVNKFLDELRKHLKDTKPQFQEIISSSKTFTEQAEILLKEAIQEQLERFSLQ</sequence>
<comment type="function">
    <text evidence="1">Produces ATP from ADP in the presence of a proton gradient across the membrane. The alpha chain is a regulatory subunit.</text>
</comment>
<comment type="catalytic activity">
    <reaction evidence="1">
        <text>ATP + H2O + 4 H(+)(in) = ADP + phosphate + 5 H(+)(out)</text>
        <dbReference type="Rhea" id="RHEA:57720"/>
        <dbReference type="ChEBI" id="CHEBI:15377"/>
        <dbReference type="ChEBI" id="CHEBI:15378"/>
        <dbReference type="ChEBI" id="CHEBI:30616"/>
        <dbReference type="ChEBI" id="CHEBI:43474"/>
        <dbReference type="ChEBI" id="CHEBI:456216"/>
        <dbReference type="EC" id="7.1.2.2"/>
    </reaction>
</comment>
<comment type="subunit">
    <text evidence="1">F-type ATPases have 2 components, CF(1) - the catalytic core - and CF(0) - the membrane proton channel. CF(1) has five subunits: alpha(3), beta(3), gamma(1), delta(1), epsilon(1). CF(0) has four main subunits: a, b, b' and c.</text>
</comment>
<comment type="subcellular location">
    <subcellularLocation>
        <location evidence="1">Plastid</location>
        <location evidence="1">Chloroplast thylakoid membrane</location>
        <topology evidence="1">Peripheral membrane protein</topology>
    </subcellularLocation>
</comment>
<comment type="similarity">
    <text evidence="1">Belongs to the ATPase alpha/beta chains family.</text>
</comment>
<dbReference type="EC" id="7.1.2.2" evidence="1"/>
<dbReference type="EMBL" id="M16842">
    <property type="protein sequence ID" value="AAA84725.1"/>
    <property type="molecule type" value="Genomic_DNA"/>
</dbReference>
<dbReference type="EMBL" id="AB042240">
    <property type="protein sequence ID" value="BAB47031.1"/>
    <property type="molecule type" value="Genomic_DNA"/>
</dbReference>
<dbReference type="PIR" id="S09351">
    <property type="entry name" value="PWWTA"/>
</dbReference>
<dbReference type="RefSeq" id="NP_114256.1">
    <property type="nucleotide sequence ID" value="NC_002762.1"/>
</dbReference>
<dbReference type="SMR" id="P12112"/>
<dbReference type="STRING" id="4565.P12112"/>
<dbReference type="PaxDb" id="4565-EPlTAEP00000010058"/>
<dbReference type="EnsemblPlants" id="TraesKAR6B01G0220340.1">
    <property type="protein sequence ID" value="cds.TraesKAR6B01G0220340.1"/>
    <property type="gene ID" value="TraesKAR6B01G0220340"/>
</dbReference>
<dbReference type="EnsemblPlants" id="TraesKAR7A01G0472710.1">
    <property type="protein sequence ID" value="cds.TraesKAR7A01G0472710.1"/>
    <property type="gene ID" value="TraesKAR7A01G0472710"/>
</dbReference>
<dbReference type="EnsemblPlants" id="TraesKARUn01G0027010.1">
    <property type="protein sequence ID" value="cds.TraesKARUn01G0027010.1"/>
    <property type="gene ID" value="TraesKARUn01G0027010"/>
</dbReference>
<dbReference type="EnsemblPlants" id="TraesKARUn01G0028140.1">
    <property type="protein sequence ID" value="cds.TraesKARUn01G0028140.1"/>
    <property type="gene ID" value="TraesKARUn01G0028140"/>
</dbReference>
<dbReference type="EnsemblPlants" id="TraesKARUn01G0028370.1">
    <property type="protein sequence ID" value="cds.TraesKARUn01G0028370.1"/>
    <property type="gene ID" value="TraesKARUn01G0028370"/>
</dbReference>
<dbReference type="EnsemblPlants" id="TraesKARUn01G0030360.1">
    <property type="protein sequence ID" value="cds.TraesKARUn01G0030360.1"/>
    <property type="gene ID" value="TraesKARUn01G0030360"/>
</dbReference>
<dbReference type="EnsemblPlants" id="TraesKARUn01G0031810.1">
    <property type="protein sequence ID" value="cds.TraesKARUn01G0031810.1"/>
    <property type="gene ID" value="TraesKARUn01G0031810"/>
</dbReference>
<dbReference type="EnsemblPlants" id="TraesKARUn01G0031900.1">
    <property type="protein sequence ID" value="cds.TraesKARUn01G0031900.1"/>
    <property type="gene ID" value="TraesKARUn01G0031900"/>
</dbReference>
<dbReference type="EnsemblPlants" id="TraesKARUn01G0033560.1">
    <property type="protein sequence ID" value="cds.TraesKARUn01G0033560.1"/>
    <property type="gene ID" value="TraesKARUn01G0033560"/>
</dbReference>
<dbReference type="EnsemblPlants" id="TraesKARUn01G0034470.1">
    <property type="protein sequence ID" value="cds.TraesKARUn01G0034470.1"/>
    <property type="gene ID" value="TraesKARUn01G0034470"/>
</dbReference>
<dbReference type="EnsemblPlants" id="TraesKARUn01G0034910.1">
    <property type="protein sequence ID" value="cds.TraesKARUn01G0034910.1"/>
    <property type="gene ID" value="TraesKARUn01G0034910"/>
</dbReference>
<dbReference type="EnsemblPlants" id="TraesKARUn01G0035180.1">
    <property type="protein sequence ID" value="cds.TraesKARUn01G0035180.1"/>
    <property type="gene ID" value="TraesKARUn01G0035180"/>
</dbReference>
<dbReference type="EnsemblPlants" id="TraesKARUn01G0035550.1">
    <property type="protein sequence ID" value="cds.TraesKARUn01G0035550.1"/>
    <property type="gene ID" value="TraesKARUn01G0035550"/>
</dbReference>
<dbReference type="EnsemblPlants" id="TraesKARUn01G0036300.1">
    <property type="protein sequence ID" value="cds.TraesKARUn01G0036300.1"/>
    <property type="gene ID" value="TraesKARUn01G0036300"/>
</dbReference>
<dbReference type="EnsemblPlants" id="TraesKARUn01G0036610.1">
    <property type="protein sequence ID" value="cds.TraesKARUn01G0036610.1"/>
    <property type="gene ID" value="TraesKARUn01G0036610"/>
</dbReference>
<dbReference type="EnsemblPlants" id="TraesKARUn01G0062140.1">
    <property type="protein sequence ID" value="cds.TraesKARUn01G0062140.1"/>
    <property type="gene ID" value="TraesKARUn01G0062140"/>
</dbReference>
<dbReference type="EnsemblPlants" id="TraesKARUn01G0066560.1">
    <property type="protein sequence ID" value="cds.TraesKARUn01G0066560.1"/>
    <property type="gene ID" value="TraesKARUn01G0066560"/>
</dbReference>
<dbReference type="EnsemblPlants" id="TraesKARUn01G0066780.1">
    <property type="protein sequence ID" value="cds.TraesKARUn01G0066780.1"/>
    <property type="gene ID" value="TraesKARUn01G0066780"/>
</dbReference>
<dbReference type="EnsemblPlants" id="TraesKARUn01G0066900.1">
    <property type="protein sequence ID" value="cds.TraesKARUn01G0066900.1"/>
    <property type="gene ID" value="TraesKARUn01G0066900"/>
</dbReference>
<dbReference type="EnsemblPlants" id="TraesKARUn01G0068200.1">
    <property type="protein sequence ID" value="cds.TraesKARUn01G0068200.1"/>
    <property type="gene ID" value="TraesKARUn01G0068200"/>
</dbReference>
<dbReference type="EnsemblPlants" id="TraesKARUn01G0068340.1">
    <property type="protein sequence ID" value="cds.TraesKARUn01G0068340.1"/>
    <property type="gene ID" value="TraesKARUn01G0068340"/>
</dbReference>
<dbReference type="EnsemblPlants" id="TraesKARUn01G0070370.1">
    <property type="protein sequence ID" value="cds.TraesKARUn01G0070370.1"/>
    <property type="gene ID" value="TraesKARUn01G0070370"/>
</dbReference>
<dbReference type="EnsemblPlants" id="TraesKARUn01G0070710.1">
    <property type="protein sequence ID" value="cds.TraesKARUn01G0070710.1"/>
    <property type="gene ID" value="TraesKARUn01G0070710"/>
</dbReference>
<dbReference type="EnsemblPlants" id="TraesKARUn01G0071600.1">
    <property type="protein sequence ID" value="cds.TraesKARUn01G0071600.1"/>
    <property type="gene ID" value="TraesKARUn01G0071600"/>
</dbReference>
<dbReference type="EnsemblPlants" id="TraesKARUn01G0072660.1">
    <property type="protein sequence ID" value="cds.TraesKARUn01G0072660.1"/>
    <property type="gene ID" value="TraesKARUn01G0072660"/>
</dbReference>
<dbReference type="EnsemblPlants" id="TraesKARUn01G0074560.1">
    <property type="protein sequence ID" value="cds.TraesKARUn01G0074560.1"/>
    <property type="gene ID" value="TraesKARUn01G0074560"/>
</dbReference>
<dbReference type="EnsemblPlants" id="TraesKARUn01G0077130.1">
    <property type="protein sequence ID" value="cds.TraesKARUn01G0077130.1"/>
    <property type="gene ID" value="TraesKARUn01G0077130"/>
</dbReference>
<dbReference type="EnsemblPlants" id="TraesKARUn01G0077530.1">
    <property type="protein sequence ID" value="cds.TraesKARUn01G0077530.1"/>
    <property type="gene ID" value="TraesKARUn01G0077530"/>
</dbReference>
<dbReference type="EnsemblPlants" id="TraesKARUn01G0079470.1">
    <property type="protein sequence ID" value="cds.TraesKARUn01G0079470.1"/>
    <property type="gene ID" value="TraesKARUn01G0079470"/>
</dbReference>
<dbReference type="EnsemblPlants" id="TraesKARUn01G0079860.1">
    <property type="protein sequence ID" value="cds.TraesKARUn01G0079860.1"/>
    <property type="gene ID" value="TraesKARUn01G0079860"/>
</dbReference>
<dbReference type="EnsemblPlants" id="TraesKARUn01G0079990.1">
    <property type="protein sequence ID" value="cds.TraesKARUn01G0079990.1"/>
    <property type="gene ID" value="TraesKARUn01G0079990"/>
</dbReference>
<dbReference type="EnsemblPlants" id="TraesKARUn01G0081410.1">
    <property type="protein sequence ID" value="cds.TraesKARUn01G0081410.1"/>
    <property type="gene ID" value="TraesKARUn01G0081410"/>
</dbReference>
<dbReference type="EnsemblPlants" id="TraesKARUn01G0082960.1">
    <property type="protein sequence ID" value="cds.TraesKARUn01G0082960.1"/>
    <property type="gene ID" value="TraesKARUn01G0082960"/>
</dbReference>
<dbReference type="EnsemblPlants" id="TraesKARUn01G0084350.1">
    <property type="protein sequence ID" value="cds.TraesKARUn01G0084350.1"/>
    <property type="gene ID" value="TraesKARUn01G0084350"/>
</dbReference>
<dbReference type="EnsemblPlants" id="TraesKARUn01G0084510.1">
    <property type="protein sequence ID" value="cds.TraesKARUn01G0084510.1"/>
    <property type="gene ID" value="TraesKARUn01G0084510"/>
</dbReference>
<dbReference type="EnsemblPlants" id="TraesKARUn01G0085420.1">
    <property type="protein sequence ID" value="cds.TraesKARUn01G0085420.1"/>
    <property type="gene ID" value="TraesKARUn01G0085420"/>
</dbReference>
<dbReference type="EnsemblPlants" id="TraesKARUn01G0086960.1">
    <property type="protein sequence ID" value="cds.TraesKARUn01G0086960.1"/>
    <property type="gene ID" value="TraesKARUn01G0086960"/>
</dbReference>
<dbReference type="EnsemblPlants" id="TraesKARUn01G0088390.1">
    <property type="protein sequence ID" value="cds.TraesKARUn01G0088390.1"/>
    <property type="gene ID" value="TraesKARUn01G0088390"/>
</dbReference>
<dbReference type="EnsemblPlants" id="TraesKARUn01G0092420.1">
    <property type="protein sequence ID" value="cds.TraesKARUn01G0092420.1"/>
    <property type="gene ID" value="TraesKARUn01G0092420"/>
</dbReference>
<dbReference type="EnsemblPlants" id="TraesKARUn01G0094020.1">
    <property type="protein sequence ID" value="cds.TraesKARUn01G0094020.1"/>
    <property type="gene ID" value="TraesKARUn01G0094020"/>
</dbReference>
<dbReference type="EnsemblPlants" id="TraesKARUn01G0094220.1">
    <property type="protein sequence ID" value="cds.TraesKARUn01G0094220.1"/>
    <property type="gene ID" value="TraesKARUn01G0094220"/>
</dbReference>
<dbReference type="EnsemblPlants" id="TraesKARUn01G0094720.1">
    <property type="protein sequence ID" value="cds.TraesKARUn01G0094720.1"/>
    <property type="gene ID" value="TraesKARUn01G0094720"/>
</dbReference>
<dbReference type="EnsemblPlants" id="TraesKARUn01G0094970.1">
    <property type="protein sequence ID" value="cds.TraesKARUn01G0094970.1"/>
    <property type="gene ID" value="TraesKARUn01G0094970"/>
</dbReference>
<dbReference type="EnsemblPlants" id="TraesKARUn01G0097800.1">
    <property type="protein sequence ID" value="cds.TraesKARUn01G0097800.1"/>
    <property type="gene ID" value="TraesKARUn01G0097800"/>
</dbReference>
<dbReference type="EnsemblPlants" id="TraesKARUn01G0098000.1">
    <property type="protein sequence ID" value="cds.TraesKARUn01G0098000.1"/>
    <property type="gene ID" value="TraesKARUn01G0098000"/>
</dbReference>
<dbReference type="EnsemblPlants" id="TraesKARUn01G0098100.1">
    <property type="protein sequence ID" value="cds.TraesKARUn01G0098100.1"/>
    <property type="gene ID" value="TraesKARUn01G0098100"/>
</dbReference>
<dbReference type="EnsemblPlants" id="TraesKARUn01G0098160.1">
    <property type="protein sequence ID" value="cds.TraesKARUn01G0098160.1"/>
    <property type="gene ID" value="TraesKARUn01G0098160"/>
</dbReference>
<dbReference type="EnsemblPlants" id="TraesKARUn01G0099080.1">
    <property type="protein sequence ID" value="cds.TraesKARUn01G0099080.1"/>
    <property type="gene ID" value="TraesKARUn01G0099080"/>
</dbReference>
<dbReference type="EnsemblPlants" id="TraesKARUn01G0100080.1">
    <property type="protein sequence ID" value="cds.TraesKARUn01G0100080.1"/>
    <property type="gene ID" value="TraesKARUn01G0100080"/>
</dbReference>
<dbReference type="EnsemblPlants" id="TraesKARUn01G0105590.1">
    <property type="protein sequence ID" value="cds.TraesKARUn01G0105590.1"/>
    <property type="gene ID" value="TraesKARUn01G0105590"/>
</dbReference>
<dbReference type="EnsemblPlants" id="TraesKARUn01G0106020.1">
    <property type="protein sequence ID" value="cds.TraesKARUn01G0106020.1"/>
    <property type="gene ID" value="TraesKARUn01G0106020"/>
</dbReference>
<dbReference type="EnsemblPlants" id="TraesKARUn01G0106810.1">
    <property type="protein sequence ID" value="cds.TraesKARUn01G0106810.1"/>
    <property type="gene ID" value="TraesKARUn01G0106810"/>
</dbReference>
<dbReference type="EnsemblPlants" id="TraesKARUn01G0106870.1">
    <property type="protein sequence ID" value="cds.TraesKARUn01G0106870.1"/>
    <property type="gene ID" value="TraesKARUn01G0106870"/>
</dbReference>
<dbReference type="EnsemblPlants" id="TraesKARUn01G0110640.1">
    <property type="protein sequence ID" value="cds.TraesKARUn01G0110640.1"/>
    <property type="gene ID" value="TraesKARUn01G0110640"/>
</dbReference>
<dbReference type="EnsemblPlants" id="TraesKARUn01G0111510.1">
    <property type="protein sequence ID" value="cds.TraesKARUn01G0111510.1"/>
    <property type="gene ID" value="TraesKARUn01G0111510"/>
</dbReference>
<dbReference type="EnsemblPlants" id="TraesKARUn01G0111720.1">
    <property type="protein sequence ID" value="cds.TraesKARUn01G0111720.1"/>
    <property type="gene ID" value="TraesKARUn01G0111720"/>
</dbReference>
<dbReference type="EnsemblPlants" id="TraesKARUn01G0119430.1">
    <property type="protein sequence ID" value="cds.TraesKARUn01G0119430.1"/>
    <property type="gene ID" value="TraesKARUn01G0119430"/>
</dbReference>
<dbReference type="EnsemblPlants" id="TraesKARUn01G0123520.1">
    <property type="protein sequence ID" value="cds.TraesKARUn01G0123520.1"/>
    <property type="gene ID" value="TraesKARUn01G0123520"/>
</dbReference>
<dbReference type="EnsemblPlants" id="TraesKARUn01G0123730.1">
    <property type="protein sequence ID" value="cds.TraesKARUn01G0123730.1"/>
    <property type="gene ID" value="TraesKARUn01G0123730"/>
</dbReference>
<dbReference type="EnsemblPlants" id="TraesKARUn01G0126330.1">
    <property type="protein sequence ID" value="cds.TraesKARUn01G0126330.1"/>
    <property type="gene ID" value="TraesKARUn01G0126330"/>
</dbReference>
<dbReference type="EnsemblPlants" id="TraesKARUn01G0126760.1">
    <property type="protein sequence ID" value="cds.TraesKARUn01G0126760.1"/>
    <property type="gene ID" value="TraesKARUn01G0126760"/>
</dbReference>
<dbReference type="EnsemblPlants" id="TraesKARUn01G0127780.1">
    <property type="protein sequence ID" value="cds.TraesKARUn01G0127780.1"/>
    <property type="gene ID" value="TraesKARUn01G0127780"/>
</dbReference>
<dbReference type="EnsemblPlants" id="TraesKARUn01G0129010.1">
    <property type="protein sequence ID" value="cds.TraesKARUn01G0129010.1"/>
    <property type="gene ID" value="TraesKARUn01G0129010"/>
</dbReference>
<dbReference type="EnsemblPlants" id="TraesKARUn01G0129760.1">
    <property type="protein sequence ID" value="cds.TraesKARUn01G0129760.1"/>
    <property type="gene ID" value="TraesKARUn01G0129760"/>
</dbReference>
<dbReference type="EnsemblPlants" id="TraesKARUn01G0132360.1">
    <property type="protein sequence ID" value="cds.TraesKARUn01G0132360.1"/>
    <property type="gene ID" value="TraesKARUn01G0132360"/>
</dbReference>
<dbReference type="EnsemblPlants" id="TraesKARUn01G0135660.1">
    <property type="protein sequence ID" value="cds.TraesKARUn01G0135660.1"/>
    <property type="gene ID" value="TraesKARUn01G0135660"/>
</dbReference>
<dbReference type="EnsemblPlants" id="TraesKARUn01G0138830.1">
    <property type="protein sequence ID" value="cds.TraesKARUn01G0138830.1"/>
    <property type="gene ID" value="TraesKARUn01G0138830"/>
</dbReference>
<dbReference type="EnsemblPlants" id="TraesKARUn01G0141870.1">
    <property type="protein sequence ID" value="cds.TraesKARUn01G0141870.1"/>
    <property type="gene ID" value="TraesKARUn01G0141870"/>
</dbReference>
<dbReference type="EnsemblPlants" id="TraesKARUn01G0143380.1">
    <property type="protein sequence ID" value="cds.TraesKARUn01G0143380.1"/>
    <property type="gene ID" value="TraesKARUn01G0143380"/>
</dbReference>
<dbReference type="EnsemblPlants" id="TraesKARUn01G0143450.1">
    <property type="protein sequence ID" value="cds.TraesKARUn01G0143450.1"/>
    <property type="gene ID" value="TraesKARUn01G0143450"/>
</dbReference>
<dbReference type="EnsemblPlants" id="TraesKARUn01G0149570.1">
    <property type="protein sequence ID" value="cds.TraesKARUn01G0149570.1"/>
    <property type="gene ID" value="TraesKARUn01G0149570"/>
</dbReference>
<dbReference type="EnsemblPlants" id="TraesKARUn01G0150460.1">
    <property type="protein sequence ID" value="cds.TraesKARUn01G0150460.1"/>
    <property type="gene ID" value="TraesKARUn01G0150460"/>
</dbReference>
<dbReference type="EnsemblPlants" id="TraesKARUn01G0150590.1">
    <property type="protein sequence ID" value="cds.TraesKARUn01G0150590.1"/>
    <property type="gene ID" value="TraesKARUn01G0150590"/>
</dbReference>
<dbReference type="EnsemblPlants" id="TraesKARUn01G0150690.1">
    <property type="protein sequence ID" value="cds.TraesKARUn01G0150690.1"/>
    <property type="gene ID" value="TraesKARUn01G0150690"/>
</dbReference>
<dbReference type="EnsemblPlants" id="TraesKARUn01G0153170.1">
    <property type="protein sequence ID" value="cds.TraesKARUn01G0153170.1"/>
    <property type="gene ID" value="TraesKARUn01G0153170"/>
</dbReference>
<dbReference type="EnsemblPlants" id="TraesKARUn01G0156420.1">
    <property type="protein sequence ID" value="cds.TraesKARUn01G0156420.1"/>
    <property type="gene ID" value="TraesKARUn01G0156420"/>
</dbReference>
<dbReference type="EnsemblPlants" id="TraesKARUn01G0157050.1">
    <property type="protein sequence ID" value="cds.TraesKARUn01G0157050.1"/>
    <property type="gene ID" value="TraesKARUn01G0157050"/>
</dbReference>
<dbReference type="EnsemblPlants" id="TraesKARUn01G0158360.1">
    <property type="protein sequence ID" value="cds.TraesKARUn01G0158360.1"/>
    <property type="gene ID" value="TraesKARUn01G0158360"/>
</dbReference>
<dbReference type="EnsemblPlants" id="TraesKARUn01G0159060.1">
    <property type="protein sequence ID" value="cds.TraesKARUn01G0159060.1"/>
    <property type="gene ID" value="TraesKARUn01G0159060"/>
</dbReference>
<dbReference type="EnsemblPlants" id="TraesKARUn01G0160030.1">
    <property type="protein sequence ID" value="cds.TraesKARUn01G0160030.1"/>
    <property type="gene ID" value="TraesKARUn01G0160030"/>
</dbReference>
<dbReference type="EnsemblPlants" id="TraesKARUn01G0160890.1">
    <property type="protein sequence ID" value="cds.TraesKARUn01G0160890.1"/>
    <property type="gene ID" value="TraesKARUn01G0160890"/>
</dbReference>
<dbReference type="EnsemblPlants" id="TraesKARUn01G0161060.1">
    <property type="protein sequence ID" value="cds.TraesKARUn01G0161060.1"/>
    <property type="gene ID" value="TraesKARUn01G0161060"/>
</dbReference>
<dbReference type="EnsemblPlants" id="TraesKARUn01G0165960.1">
    <property type="protein sequence ID" value="cds.TraesKARUn01G0165960.1"/>
    <property type="gene ID" value="TraesKARUn01G0165960"/>
</dbReference>
<dbReference type="EnsemblPlants" id="TraesKARUn01G0166210.1">
    <property type="protein sequence ID" value="cds.TraesKARUn01G0166210.1"/>
    <property type="gene ID" value="TraesKARUn01G0166210"/>
</dbReference>
<dbReference type="EnsemblPlants" id="TraesKARUn01G0166370.1">
    <property type="protein sequence ID" value="cds.TraesKARUn01G0166370.1"/>
    <property type="gene ID" value="TraesKARUn01G0166370"/>
</dbReference>
<dbReference type="EnsemblPlants" id="TraesKARUn01G0166450.1">
    <property type="protein sequence ID" value="cds.TraesKARUn01G0166450.1"/>
    <property type="gene ID" value="TraesKARUn01G0166450"/>
</dbReference>
<dbReference type="EnsemblPlants" id="TraesKARUn01G0166510.1">
    <property type="protein sequence ID" value="cds.TraesKARUn01G0166510.1"/>
    <property type="gene ID" value="TraesKARUn01G0166510"/>
</dbReference>
<dbReference type="EnsemblPlants" id="TraesKARUn01G0166640.1">
    <property type="protein sequence ID" value="cds.TraesKARUn01G0166640.1"/>
    <property type="gene ID" value="TraesKARUn01G0166640"/>
</dbReference>
<dbReference type="EnsemblPlants" id="TraesKARUn01G0171800.1">
    <property type="protein sequence ID" value="cds.TraesKARUn01G0171800.1"/>
    <property type="gene ID" value="TraesKARUn01G0171800"/>
</dbReference>
<dbReference type="EnsemblPlants" id="TraesKARUn01G0172390.1">
    <property type="protein sequence ID" value="cds.TraesKARUn01G0172390.1"/>
    <property type="gene ID" value="TraesKARUn01G0172390"/>
</dbReference>
<dbReference type="EnsemblPlants" id="TraesKARUn01G0172690.1">
    <property type="protein sequence ID" value="cds.TraesKARUn01G0172690.1"/>
    <property type="gene ID" value="TraesKARUn01G0172690"/>
</dbReference>
<dbReference type="EnsemblPlants" id="TraesKARUn01G0181360.1">
    <property type="protein sequence ID" value="cds.TraesKARUn01G0181360.1"/>
    <property type="gene ID" value="TraesKARUn01G0181360"/>
</dbReference>
<dbReference type="EnsemblPlants" id="TraesKARUn01G0181750.1">
    <property type="protein sequence ID" value="cds.TraesKARUn01G0181750.1"/>
    <property type="gene ID" value="TraesKARUn01G0181750"/>
</dbReference>
<dbReference type="EnsemblPlants" id="TraesKARUn01G0185760.1">
    <property type="protein sequence ID" value="cds.TraesKARUn01G0185760.1"/>
    <property type="gene ID" value="TraesKARUn01G0185760"/>
</dbReference>
<dbReference type="EnsemblPlants" id="TraesKARUn01G0187270.1">
    <property type="protein sequence ID" value="cds.TraesKARUn01G0187270.1"/>
    <property type="gene ID" value="TraesKARUn01G0187270"/>
</dbReference>
<dbReference type="EnsemblPlants" id="TraesKARUn01G0192000.1">
    <property type="protein sequence ID" value="cds.TraesKARUn01G0192000.1"/>
    <property type="gene ID" value="TraesKARUn01G0192000"/>
</dbReference>
<dbReference type="EnsemblPlants" id="TraesNOR6B03G03558180.1">
    <property type="protein sequence ID" value="TraesNOR6B03G03558180.1.CDS1"/>
    <property type="gene ID" value="TraesNOR6B03G03558180"/>
</dbReference>
<dbReference type="EnsemblPlants" id="TraesPARA_EIv1.0_1544830.1">
    <property type="protein sequence ID" value="TraesPARA_EIv1.0_1544830.1.CDS1"/>
    <property type="gene ID" value="TraesPARA_EIv1.0_1544830"/>
</dbReference>
<dbReference type="EnsemblPlants" id="TraesPARA_EIv1.0_1868860.1">
    <property type="protein sequence ID" value="TraesPARA_EIv1.0_1868860.1.CDS1"/>
    <property type="gene ID" value="TraesPARA_EIv1.0_1868860"/>
</dbReference>
<dbReference type="EnsemblPlants" id="TraesPARA_EIv1.0_2055660.1">
    <property type="protein sequence ID" value="TraesPARA_EIv1.0_2055660.1.CDS1"/>
    <property type="gene ID" value="TraesPARA_EIv1.0_2055660"/>
</dbReference>
<dbReference type="EnsemblPlants" id="TraesPARA_EIv1.0_2643890.1">
    <property type="protein sequence ID" value="TraesPARA_EIv1.0_2643890.1.CDS1"/>
    <property type="gene ID" value="TraesPARA_EIv1.0_2643890"/>
</dbReference>
<dbReference type="EnsemblPlants" id="TraesPARA_EIv1.0_2644110.1">
    <property type="protein sequence ID" value="TraesPARA_EIv1.0_2644110.1.CDS1"/>
    <property type="gene ID" value="TraesPARA_EIv1.0_2644110"/>
</dbReference>
<dbReference type="EnsemblPlants" id="TraesPARA_EIv1.0_2645600.1">
    <property type="protein sequence ID" value="TraesPARA_EIv1.0_2645600.1.CDS1"/>
    <property type="gene ID" value="TraesPARA_EIv1.0_2645600"/>
</dbReference>
<dbReference type="EnsemblPlants" id="TraesPARA_EIv1.0_2645730.1">
    <property type="protein sequence ID" value="TraesPARA_EIv1.0_2645730.1.CDS1"/>
    <property type="gene ID" value="TraesPARA_EIv1.0_2645730"/>
</dbReference>
<dbReference type="EnsemblPlants" id="TraesPARA_EIv1.0_2646880.1">
    <property type="protein sequence ID" value="TraesPARA_EIv1.0_2646880.1.CDS1"/>
    <property type="gene ID" value="TraesPARA_EIv1.0_2646880"/>
</dbReference>
<dbReference type="EnsemblPlants" id="TraesPARA_EIv1.0_2647040.1">
    <property type="protein sequence ID" value="TraesPARA_EIv1.0_2647040.1.CDS1"/>
    <property type="gene ID" value="TraesPARA_EIv1.0_2647040"/>
</dbReference>
<dbReference type="EnsemblPlants" id="TraesPARA_EIv1.0_2647420.1">
    <property type="protein sequence ID" value="TraesPARA_EIv1.0_2647420.1.CDS1"/>
    <property type="gene ID" value="TraesPARA_EIv1.0_2647420"/>
</dbReference>
<dbReference type="EnsemblPlants" id="TraesPARA_EIv1.0_2648570.1">
    <property type="protein sequence ID" value="TraesPARA_EIv1.0_2648570.1.CDS1"/>
    <property type="gene ID" value="TraesPARA_EIv1.0_2648570"/>
</dbReference>
<dbReference type="EnsemblPlants" id="TraesPARA_EIv1.0_2648680.1">
    <property type="protein sequence ID" value="TraesPARA_EIv1.0_2648680.1.CDS1"/>
    <property type="gene ID" value="TraesPARA_EIv1.0_2648680"/>
</dbReference>
<dbReference type="EnsemblPlants" id="TraesPARA_EIv1.0_2649390.1">
    <property type="protein sequence ID" value="TraesPARA_EIv1.0_2649390.1.CDS1"/>
    <property type="gene ID" value="TraesPARA_EIv1.0_2649390"/>
</dbReference>
<dbReference type="EnsemblPlants" id="TraesPARA_EIv1.0_2649640.1">
    <property type="protein sequence ID" value="TraesPARA_EIv1.0_2649640.1.CDS1"/>
    <property type="gene ID" value="TraesPARA_EIv1.0_2649640"/>
</dbReference>
<dbReference type="EnsemblPlants" id="TraesPARA_EIv1.0_2650600.1">
    <property type="protein sequence ID" value="TraesPARA_EIv1.0_2650600.1.CDS1"/>
    <property type="gene ID" value="TraesPARA_EIv1.0_2650600"/>
</dbReference>
<dbReference type="EnsemblPlants" id="TraesPARA_EIv1.0_2652300.1">
    <property type="protein sequence ID" value="TraesPARA_EIv1.0_2652300.1.CDS1"/>
    <property type="gene ID" value="TraesPARA_EIv1.0_2652300"/>
</dbReference>
<dbReference type="EnsemblPlants" id="TraesPARA_EIv1.0_2652580.1">
    <property type="protein sequence ID" value="TraesPARA_EIv1.0_2652580.1.CDS1"/>
    <property type="gene ID" value="TraesPARA_EIv1.0_2652580"/>
</dbReference>
<dbReference type="EnsemblPlants" id="TraesPARA_EIv1.0_2663140.1">
    <property type="protein sequence ID" value="TraesPARA_EIv1.0_2663140.1.CDS1"/>
    <property type="gene ID" value="TraesPARA_EIv1.0_2663140"/>
</dbReference>
<dbReference type="EnsemblPlants" id="TraesPARA_EIv1.0_2663540.1">
    <property type="protein sequence ID" value="TraesPARA_EIv1.0_2663540.1.CDS1"/>
    <property type="gene ID" value="TraesPARA_EIv1.0_2663540"/>
</dbReference>
<dbReference type="EnsemblPlants" id="TraesPARA_EIv1.0_2669540.1">
    <property type="protein sequence ID" value="TraesPARA_EIv1.0_2669540.1.CDS1"/>
    <property type="gene ID" value="TraesPARA_EIv1.0_2669540"/>
</dbReference>
<dbReference type="EnsemblPlants" id="TraesPARA_EIv1.0_2669560.1">
    <property type="protein sequence ID" value="TraesPARA_EIv1.0_2669560.1.CDS1"/>
    <property type="gene ID" value="TraesPARA_EIv1.0_2669560"/>
</dbReference>
<dbReference type="EnsemblPlants" id="TraesPARA_EIv1.0_2669970.1">
    <property type="protein sequence ID" value="TraesPARA_EIv1.0_2669970.1.CDS1"/>
    <property type="gene ID" value="TraesPARA_EIv1.0_2669970"/>
</dbReference>
<dbReference type="EnsemblPlants" id="TraesPARA_EIv1.0_2670090.1">
    <property type="protein sequence ID" value="TraesPARA_EIv1.0_2670090.1.CDS1"/>
    <property type="gene ID" value="TraesPARA_EIv1.0_2670090"/>
</dbReference>
<dbReference type="EnsemblPlants" id="TraesPARA_EIv1.0_2671470.1">
    <property type="protein sequence ID" value="TraesPARA_EIv1.0_2671470.1.CDS1"/>
    <property type="gene ID" value="TraesPARA_EIv1.0_2671470"/>
</dbReference>
<dbReference type="EnsemblPlants" id="TraesPARA_EIv1.0_2672190.1">
    <property type="protein sequence ID" value="TraesPARA_EIv1.0_2672190.1.CDS1"/>
    <property type="gene ID" value="TraesPARA_EIv1.0_2672190"/>
</dbReference>
<dbReference type="EnsemblPlants" id="TraesPARA_EIv1.0_2677510.1">
    <property type="protein sequence ID" value="TraesPARA_EIv1.0_2677510.1.CDS1"/>
    <property type="gene ID" value="TraesPARA_EIv1.0_2677510"/>
</dbReference>
<dbReference type="EnsemblPlants" id="TraesPARA_EIv1.0_2680100.1">
    <property type="protein sequence ID" value="TraesPARA_EIv1.0_2680100.1.CDS1"/>
    <property type="gene ID" value="TraesPARA_EIv1.0_2680100"/>
</dbReference>
<dbReference type="EnsemblPlants" id="TraesPARA_EIv1.0_2681180.1">
    <property type="protein sequence ID" value="TraesPARA_EIv1.0_2681180.1.CDS1"/>
    <property type="gene ID" value="TraesPARA_EIv1.0_2681180"/>
</dbReference>
<dbReference type="EnsemblPlants" id="TraesPARA_EIv1.0_2681720.1">
    <property type="protein sequence ID" value="TraesPARA_EIv1.0_2681720.1.CDS1"/>
    <property type="gene ID" value="TraesPARA_EIv1.0_2681720"/>
</dbReference>
<dbReference type="EnsemblPlants" id="TraesRN1D0100499000.1">
    <property type="protein sequence ID" value="TraesRN1D0100499000.1"/>
    <property type="gene ID" value="TraesRN1D0100499000"/>
</dbReference>
<dbReference type="EnsemblPlants" id="TraesRN1D0100499200.1">
    <property type="protein sequence ID" value="TraesRN1D0100499200.1"/>
    <property type="gene ID" value="TraesRN1D0100499200"/>
</dbReference>
<dbReference type="GeneID" id="803205"/>
<dbReference type="Gramene" id="TraesKAR6B01G0220340.1">
    <property type="protein sequence ID" value="cds.TraesKAR6B01G0220340.1"/>
    <property type="gene ID" value="TraesKAR6B01G0220340"/>
</dbReference>
<dbReference type="Gramene" id="TraesKAR7A01G0472710.1">
    <property type="protein sequence ID" value="cds.TraesKAR7A01G0472710.1"/>
    <property type="gene ID" value="TraesKAR7A01G0472710"/>
</dbReference>
<dbReference type="Gramene" id="TraesKARUn01G0027010.1">
    <property type="protein sequence ID" value="cds.TraesKARUn01G0027010.1"/>
    <property type="gene ID" value="TraesKARUn01G0027010"/>
</dbReference>
<dbReference type="Gramene" id="TraesKARUn01G0028140.1">
    <property type="protein sequence ID" value="cds.TraesKARUn01G0028140.1"/>
    <property type="gene ID" value="TraesKARUn01G0028140"/>
</dbReference>
<dbReference type="Gramene" id="TraesKARUn01G0028370.1">
    <property type="protein sequence ID" value="cds.TraesKARUn01G0028370.1"/>
    <property type="gene ID" value="TraesKARUn01G0028370"/>
</dbReference>
<dbReference type="Gramene" id="TraesKARUn01G0030360.1">
    <property type="protein sequence ID" value="cds.TraesKARUn01G0030360.1"/>
    <property type="gene ID" value="TraesKARUn01G0030360"/>
</dbReference>
<dbReference type="Gramene" id="TraesKARUn01G0031810.1">
    <property type="protein sequence ID" value="cds.TraesKARUn01G0031810.1"/>
    <property type="gene ID" value="TraesKARUn01G0031810"/>
</dbReference>
<dbReference type="Gramene" id="TraesKARUn01G0031900.1">
    <property type="protein sequence ID" value="cds.TraesKARUn01G0031900.1"/>
    <property type="gene ID" value="TraesKARUn01G0031900"/>
</dbReference>
<dbReference type="Gramene" id="TraesKARUn01G0033560.1">
    <property type="protein sequence ID" value="cds.TraesKARUn01G0033560.1"/>
    <property type="gene ID" value="TraesKARUn01G0033560"/>
</dbReference>
<dbReference type="Gramene" id="TraesKARUn01G0034470.1">
    <property type="protein sequence ID" value="cds.TraesKARUn01G0034470.1"/>
    <property type="gene ID" value="TraesKARUn01G0034470"/>
</dbReference>
<dbReference type="Gramene" id="TraesKARUn01G0034910.1">
    <property type="protein sequence ID" value="cds.TraesKARUn01G0034910.1"/>
    <property type="gene ID" value="TraesKARUn01G0034910"/>
</dbReference>
<dbReference type="Gramene" id="TraesKARUn01G0035180.1">
    <property type="protein sequence ID" value="cds.TraesKARUn01G0035180.1"/>
    <property type="gene ID" value="TraesKARUn01G0035180"/>
</dbReference>
<dbReference type="Gramene" id="TraesKARUn01G0035550.1">
    <property type="protein sequence ID" value="cds.TraesKARUn01G0035550.1"/>
    <property type="gene ID" value="TraesKARUn01G0035550"/>
</dbReference>
<dbReference type="Gramene" id="TraesKARUn01G0036300.1">
    <property type="protein sequence ID" value="cds.TraesKARUn01G0036300.1"/>
    <property type="gene ID" value="TraesKARUn01G0036300"/>
</dbReference>
<dbReference type="Gramene" id="TraesKARUn01G0036610.1">
    <property type="protein sequence ID" value="cds.TraesKARUn01G0036610.1"/>
    <property type="gene ID" value="TraesKARUn01G0036610"/>
</dbReference>
<dbReference type="Gramene" id="TraesKARUn01G0062140.1">
    <property type="protein sequence ID" value="cds.TraesKARUn01G0062140.1"/>
    <property type="gene ID" value="TraesKARUn01G0062140"/>
</dbReference>
<dbReference type="Gramene" id="TraesKARUn01G0066560.1">
    <property type="protein sequence ID" value="cds.TraesKARUn01G0066560.1"/>
    <property type="gene ID" value="TraesKARUn01G0066560"/>
</dbReference>
<dbReference type="Gramene" id="TraesKARUn01G0066780.1">
    <property type="protein sequence ID" value="cds.TraesKARUn01G0066780.1"/>
    <property type="gene ID" value="TraesKARUn01G0066780"/>
</dbReference>
<dbReference type="Gramene" id="TraesKARUn01G0066900.1">
    <property type="protein sequence ID" value="cds.TraesKARUn01G0066900.1"/>
    <property type="gene ID" value="TraesKARUn01G0066900"/>
</dbReference>
<dbReference type="Gramene" id="TraesKARUn01G0068200.1">
    <property type="protein sequence ID" value="cds.TraesKARUn01G0068200.1"/>
    <property type="gene ID" value="TraesKARUn01G0068200"/>
</dbReference>
<dbReference type="Gramene" id="TraesKARUn01G0068340.1">
    <property type="protein sequence ID" value="cds.TraesKARUn01G0068340.1"/>
    <property type="gene ID" value="TraesKARUn01G0068340"/>
</dbReference>
<dbReference type="Gramene" id="TraesKARUn01G0070370.1">
    <property type="protein sequence ID" value="cds.TraesKARUn01G0070370.1"/>
    <property type="gene ID" value="TraesKARUn01G0070370"/>
</dbReference>
<dbReference type="Gramene" id="TraesKARUn01G0070710.1">
    <property type="protein sequence ID" value="cds.TraesKARUn01G0070710.1"/>
    <property type="gene ID" value="TraesKARUn01G0070710"/>
</dbReference>
<dbReference type="Gramene" id="TraesKARUn01G0071600.1">
    <property type="protein sequence ID" value="cds.TraesKARUn01G0071600.1"/>
    <property type="gene ID" value="TraesKARUn01G0071600"/>
</dbReference>
<dbReference type="Gramene" id="TraesKARUn01G0072660.1">
    <property type="protein sequence ID" value="cds.TraesKARUn01G0072660.1"/>
    <property type="gene ID" value="TraesKARUn01G0072660"/>
</dbReference>
<dbReference type="Gramene" id="TraesKARUn01G0074560.1">
    <property type="protein sequence ID" value="cds.TraesKARUn01G0074560.1"/>
    <property type="gene ID" value="TraesKARUn01G0074560"/>
</dbReference>
<dbReference type="Gramene" id="TraesKARUn01G0077130.1">
    <property type="protein sequence ID" value="cds.TraesKARUn01G0077130.1"/>
    <property type="gene ID" value="TraesKARUn01G0077130"/>
</dbReference>
<dbReference type="Gramene" id="TraesKARUn01G0077530.1">
    <property type="protein sequence ID" value="cds.TraesKARUn01G0077530.1"/>
    <property type="gene ID" value="TraesKARUn01G0077530"/>
</dbReference>
<dbReference type="Gramene" id="TraesKARUn01G0079470.1">
    <property type="protein sequence ID" value="cds.TraesKARUn01G0079470.1"/>
    <property type="gene ID" value="TraesKARUn01G0079470"/>
</dbReference>
<dbReference type="Gramene" id="TraesKARUn01G0079860.1">
    <property type="protein sequence ID" value="cds.TraesKARUn01G0079860.1"/>
    <property type="gene ID" value="TraesKARUn01G0079860"/>
</dbReference>
<dbReference type="Gramene" id="TraesKARUn01G0079990.1">
    <property type="protein sequence ID" value="cds.TraesKARUn01G0079990.1"/>
    <property type="gene ID" value="TraesKARUn01G0079990"/>
</dbReference>
<dbReference type="Gramene" id="TraesKARUn01G0081410.1">
    <property type="protein sequence ID" value="cds.TraesKARUn01G0081410.1"/>
    <property type="gene ID" value="TraesKARUn01G0081410"/>
</dbReference>
<dbReference type="Gramene" id="TraesKARUn01G0082960.1">
    <property type="protein sequence ID" value="cds.TraesKARUn01G0082960.1"/>
    <property type="gene ID" value="TraesKARUn01G0082960"/>
</dbReference>
<dbReference type="Gramene" id="TraesKARUn01G0084350.1">
    <property type="protein sequence ID" value="cds.TraesKARUn01G0084350.1"/>
    <property type="gene ID" value="TraesKARUn01G0084350"/>
</dbReference>
<dbReference type="Gramene" id="TraesKARUn01G0084510.1">
    <property type="protein sequence ID" value="cds.TraesKARUn01G0084510.1"/>
    <property type="gene ID" value="TraesKARUn01G0084510"/>
</dbReference>
<dbReference type="Gramene" id="TraesKARUn01G0085420.1">
    <property type="protein sequence ID" value="cds.TraesKARUn01G0085420.1"/>
    <property type="gene ID" value="TraesKARUn01G0085420"/>
</dbReference>
<dbReference type="Gramene" id="TraesKARUn01G0086960.1">
    <property type="protein sequence ID" value="cds.TraesKARUn01G0086960.1"/>
    <property type="gene ID" value="TraesKARUn01G0086960"/>
</dbReference>
<dbReference type="Gramene" id="TraesKARUn01G0088390.1">
    <property type="protein sequence ID" value="cds.TraesKARUn01G0088390.1"/>
    <property type="gene ID" value="TraesKARUn01G0088390"/>
</dbReference>
<dbReference type="Gramene" id="TraesKARUn01G0092420.1">
    <property type="protein sequence ID" value="cds.TraesKARUn01G0092420.1"/>
    <property type="gene ID" value="TraesKARUn01G0092420"/>
</dbReference>
<dbReference type="Gramene" id="TraesKARUn01G0094020.1">
    <property type="protein sequence ID" value="cds.TraesKARUn01G0094020.1"/>
    <property type="gene ID" value="TraesKARUn01G0094020"/>
</dbReference>
<dbReference type="Gramene" id="TraesKARUn01G0094220.1">
    <property type="protein sequence ID" value="cds.TraesKARUn01G0094220.1"/>
    <property type="gene ID" value="TraesKARUn01G0094220"/>
</dbReference>
<dbReference type="Gramene" id="TraesKARUn01G0094720.1">
    <property type="protein sequence ID" value="cds.TraesKARUn01G0094720.1"/>
    <property type="gene ID" value="TraesKARUn01G0094720"/>
</dbReference>
<dbReference type="Gramene" id="TraesKARUn01G0094970.1">
    <property type="protein sequence ID" value="cds.TraesKARUn01G0094970.1"/>
    <property type="gene ID" value="TraesKARUn01G0094970"/>
</dbReference>
<dbReference type="Gramene" id="TraesKARUn01G0097800.1">
    <property type="protein sequence ID" value="cds.TraesKARUn01G0097800.1"/>
    <property type="gene ID" value="TraesKARUn01G0097800"/>
</dbReference>
<dbReference type="Gramene" id="TraesKARUn01G0098000.1">
    <property type="protein sequence ID" value="cds.TraesKARUn01G0098000.1"/>
    <property type="gene ID" value="TraesKARUn01G0098000"/>
</dbReference>
<dbReference type="Gramene" id="TraesKARUn01G0098100.1">
    <property type="protein sequence ID" value="cds.TraesKARUn01G0098100.1"/>
    <property type="gene ID" value="TraesKARUn01G0098100"/>
</dbReference>
<dbReference type="Gramene" id="TraesKARUn01G0098160.1">
    <property type="protein sequence ID" value="cds.TraesKARUn01G0098160.1"/>
    <property type="gene ID" value="TraesKARUn01G0098160"/>
</dbReference>
<dbReference type="Gramene" id="TraesKARUn01G0099080.1">
    <property type="protein sequence ID" value="cds.TraesKARUn01G0099080.1"/>
    <property type="gene ID" value="TraesKARUn01G0099080"/>
</dbReference>
<dbReference type="Gramene" id="TraesKARUn01G0100080.1">
    <property type="protein sequence ID" value="cds.TraesKARUn01G0100080.1"/>
    <property type="gene ID" value="TraesKARUn01G0100080"/>
</dbReference>
<dbReference type="Gramene" id="TraesKARUn01G0105590.1">
    <property type="protein sequence ID" value="cds.TraesKARUn01G0105590.1"/>
    <property type="gene ID" value="TraesKARUn01G0105590"/>
</dbReference>
<dbReference type="Gramene" id="TraesKARUn01G0106020.1">
    <property type="protein sequence ID" value="cds.TraesKARUn01G0106020.1"/>
    <property type="gene ID" value="TraesKARUn01G0106020"/>
</dbReference>
<dbReference type="Gramene" id="TraesKARUn01G0106810.1">
    <property type="protein sequence ID" value="cds.TraesKARUn01G0106810.1"/>
    <property type="gene ID" value="TraesKARUn01G0106810"/>
</dbReference>
<dbReference type="Gramene" id="TraesKARUn01G0106870.1">
    <property type="protein sequence ID" value="cds.TraesKARUn01G0106870.1"/>
    <property type="gene ID" value="TraesKARUn01G0106870"/>
</dbReference>
<dbReference type="Gramene" id="TraesKARUn01G0110640.1">
    <property type="protein sequence ID" value="cds.TraesKARUn01G0110640.1"/>
    <property type="gene ID" value="TraesKARUn01G0110640"/>
</dbReference>
<dbReference type="Gramene" id="TraesKARUn01G0111510.1">
    <property type="protein sequence ID" value="cds.TraesKARUn01G0111510.1"/>
    <property type="gene ID" value="TraesKARUn01G0111510"/>
</dbReference>
<dbReference type="Gramene" id="TraesKARUn01G0111720.1">
    <property type="protein sequence ID" value="cds.TraesKARUn01G0111720.1"/>
    <property type="gene ID" value="TraesKARUn01G0111720"/>
</dbReference>
<dbReference type="Gramene" id="TraesKARUn01G0119430.1">
    <property type="protein sequence ID" value="cds.TraesKARUn01G0119430.1"/>
    <property type="gene ID" value="TraesKARUn01G0119430"/>
</dbReference>
<dbReference type="Gramene" id="TraesKARUn01G0123520.1">
    <property type="protein sequence ID" value="cds.TraesKARUn01G0123520.1"/>
    <property type="gene ID" value="TraesKARUn01G0123520"/>
</dbReference>
<dbReference type="Gramene" id="TraesKARUn01G0123730.1">
    <property type="protein sequence ID" value="cds.TraesKARUn01G0123730.1"/>
    <property type="gene ID" value="TraesKARUn01G0123730"/>
</dbReference>
<dbReference type="Gramene" id="TraesKARUn01G0126330.1">
    <property type="protein sequence ID" value="cds.TraesKARUn01G0126330.1"/>
    <property type="gene ID" value="TraesKARUn01G0126330"/>
</dbReference>
<dbReference type="Gramene" id="TraesKARUn01G0126760.1">
    <property type="protein sequence ID" value="cds.TraesKARUn01G0126760.1"/>
    <property type="gene ID" value="TraesKARUn01G0126760"/>
</dbReference>
<dbReference type="Gramene" id="TraesKARUn01G0127780.1">
    <property type="protein sequence ID" value="cds.TraesKARUn01G0127780.1"/>
    <property type="gene ID" value="TraesKARUn01G0127780"/>
</dbReference>
<dbReference type="Gramene" id="TraesKARUn01G0129010.1">
    <property type="protein sequence ID" value="cds.TraesKARUn01G0129010.1"/>
    <property type="gene ID" value="TraesKARUn01G0129010"/>
</dbReference>
<dbReference type="Gramene" id="TraesKARUn01G0129760.1">
    <property type="protein sequence ID" value="cds.TraesKARUn01G0129760.1"/>
    <property type="gene ID" value="TraesKARUn01G0129760"/>
</dbReference>
<dbReference type="Gramene" id="TraesKARUn01G0132360.1">
    <property type="protein sequence ID" value="cds.TraesKARUn01G0132360.1"/>
    <property type="gene ID" value="TraesKARUn01G0132360"/>
</dbReference>
<dbReference type="Gramene" id="TraesKARUn01G0135660.1">
    <property type="protein sequence ID" value="cds.TraesKARUn01G0135660.1"/>
    <property type="gene ID" value="TraesKARUn01G0135660"/>
</dbReference>
<dbReference type="Gramene" id="TraesKARUn01G0138830.1">
    <property type="protein sequence ID" value="cds.TraesKARUn01G0138830.1"/>
    <property type="gene ID" value="TraesKARUn01G0138830"/>
</dbReference>
<dbReference type="Gramene" id="TraesKARUn01G0141870.1">
    <property type="protein sequence ID" value="cds.TraesKARUn01G0141870.1"/>
    <property type="gene ID" value="TraesKARUn01G0141870"/>
</dbReference>
<dbReference type="Gramene" id="TraesKARUn01G0143380.1">
    <property type="protein sequence ID" value="cds.TraesKARUn01G0143380.1"/>
    <property type="gene ID" value="TraesKARUn01G0143380"/>
</dbReference>
<dbReference type="Gramene" id="TraesKARUn01G0143450.1">
    <property type="protein sequence ID" value="cds.TraesKARUn01G0143450.1"/>
    <property type="gene ID" value="TraesKARUn01G0143450"/>
</dbReference>
<dbReference type="Gramene" id="TraesKARUn01G0149570.1">
    <property type="protein sequence ID" value="cds.TraesKARUn01G0149570.1"/>
    <property type="gene ID" value="TraesKARUn01G0149570"/>
</dbReference>
<dbReference type="Gramene" id="TraesKARUn01G0150460.1">
    <property type="protein sequence ID" value="cds.TraesKARUn01G0150460.1"/>
    <property type="gene ID" value="TraesKARUn01G0150460"/>
</dbReference>
<dbReference type="Gramene" id="TraesKARUn01G0150590.1">
    <property type="protein sequence ID" value="cds.TraesKARUn01G0150590.1"/>
    <property type="gene ID" value="TraesKARUn01G0150590"/>
</dbReference>
<dbReference type="Gramene" id="TraesKARUn01G0150690.1">
    <property type="protein sequence ID" value="cds.TraesKARUn01G0150690.1"/>
    <property type="gene ID" value="TraesKARUn01G0150690"/>
</dbReference>
<dbReference type="Gramene" id="TraesKARUn01G0153170.1">
    <property type="protein sequence ID" value="cds.TraesKARUn01G0153170.1"/>
    <property type="gene ID" value="TraesKARUn01G0153170"/>
</dbReference>
<dbReference type="Gramene" id="TraesKARUn01G0156420.1">
    <property type="protein sequence ID" value="cds.TraesKARUn01G0156420.1"/>
    <property type="gene ID" value="TraesKARUn01G0156420"/>
</dbReference>
<dbReference type="Gramene" id="TraesKARUn01G0157050.1">
    <property type="protein sequence ID" value="cds.TraesKARUn01G0157050.1"/>
    <property type="gene ID" value="TraesKARUn01G0157050"/>
</dbReference>
<dbReference type="Gramene" id="TraesKARUn01G0158360.1">
    <property type="protein sequence ID" value="cds.TraesKARUn01G0158360.1"/>
    <property type="gene ID" value="TraesKARUn01G0158360"/>
</dbReference>
<dbReference type="Gramene" id="TraesKARUn01G0159060.1">
    <property type="protein sequence ID" value="cds.TraesKARUn01G0159060.1"/>
    <property type="gene ID" value="TraesKARUn01G0159060"/>
</dbReference>
<dbReference type="Gramene" id="TraesKARUn01G0160030.1">
    <property type="protein sequence ID" value="cds.TraesKARUn01G0160030.1"/>
    <property type="gene ID" value="TraesKARUn01G0160030"/>
</dbReference>
<dbReference type="Gramene" id="TraesKARUn01G0160890.1">
    <property type="protein sequence ID" value="cds.TraesKARUn01G0160890.1"/>
    <property type="gene ID" value="TraesKARUn01G0160890"/>
</dbReference>
<dbReference type="Gramene" id="TraesKARUn01G0161060.1">
    <property type="protein sequence ID" value="cds.TraesKARUn01G0161060.1"/>
    <property type="gene ID" value="TraesKARUn01G0161060"/>
</dbReference>
<dbReference type="Gramene" id="TraesKARUn01G0165960.1">
    <property type="protein sequence ID" value="cds.TraesKARUn01G0165960.1"/>
    <property type="gene ID" value="TraesKARUn01G0165960"/>
</dbReference>
<dbReference type="Gramene" id="TraesKARUn01G0166210.1">
    <property type="protein sequence ID" value="cds.TraesKARUn01G0166210.1"/>
    <property type="gene ID" value="TraesKARUn01G0166210"/>
</dbReference>
<dbReference type="Gramene" id="TraesKARUn01G0166370.1">
    <property type="protein sequence ID" value="cds.TraesKARUn01G0166370.1"/>
    <property type="gene ID" value="TraesKARUn01G0166370"/>
</dbReference>
<dbReference type="Gramene" id="TraesKARUn01G0166450.1">
    <property type="protein sequence ID" value="cds.TraesKARUn01G0166450.1"/>
    <property type="gene ID" value="TraesKARUn01G0166450"/>
</dbReference>
<dbReference type="Gramene" id="TraesKARUn01G0166510.1">
    <property type="protein sequence ID" value="cds.TraesKARUn01G0166510.1"/>
    <property type="gene ID" value="TraesKARUn01G0166510"/>
</dbReference>
<dbReference type="Gramene" id="TraesKARUn01G0166640.1">
    <property type="protein sequence ID" value="cds.TraesKARUn01G0166640.1"/>
    <property type="gene ID" value="TraesKARUn01G0166640"/>
</dbReference>
<dbReference type="Gramene" id="TraesKARUn01G0171800.1">
    <property type="protein sequence ID" value="cds.TraesKARUn01G0171800.1"/>
    <property type="gene ID" value="TraesKARUn01G0171800"/>
</dbReference>
<dbReference type="Gramene" id="TraesKARUn01G0172390.1">
    <property type="protein sequence ID" value="cds.TraesKARUn01G0172390.1"/>
    <property type="gene ID" value="TraesKARUn01G0172390"/>
</dbReference>
<dbReference type="Gramene" id="TraesKARUn01G0172690.1">
    <property type="protein sequence ID" value="cds.TraesKARUn01G0172690.1"/>
    <property type="gene ID" value="TraesKARUn01G0172690"/>
</dbReference>
<dbReference type="Gramene" id="TraesKARUn01G0181360.1">
    <property type="protein sequence ID" value="cds.TraesKARUn01G0181360.1"/>
    <property type="gene ID" value="TraesKARUn01G0181360"/>
</dbReference>
<dbReference type="Gramene" id="TraesKARUn01G0181750.1">
    <property type="protein sequence ID" value="cds.TraesKARUn01G0181750.1"/>
    <property type="gene ID" value="TraesKARUn01G0181750"/>
</dbReference>
<dbReference type="Gramene" id="TraesKARUn01G0185760.1">
    <property type="protein sequence ID" value="cds.TraesKARUn01G0185760.1"/>
    <property type="gene ID" value="TraesKARUn01G0185760"/>
</dbReference>
<dbReference type="Gramene" id="TraesKARUn01G0187270.1">
    <property type="protein sequence ID" value="cds.TraesKARUn01G0187270.1"/>
    <property type="gene ID" value="TraesKARUn01G0187270"/>
</dbReference>
<dbReference type="Gramene" id="TraesKARUn01G0192000.1">
    <property type="protein sequence ID" value="cds.TraesKARUn01G0192000.1"/>
    <property type="gene ID" value="TraesKARUn01G0192000"/>
</dbReference>
<dbReference type="Gramene" id="TraesNOR6B03G03558180.1">
    <property type="protein sequence ID" value="TraesNOR6B03G03558180.1.CDS1"/>
    <property type="gene ID" value="TraesNOR6B03G03558180"/>
</dbReference>
<dbReference type="Gramene" id="TraesPARA_EIv1.0_1544830.1">
    <property type="protein sequence ID" value="TraesPARA_EIv1.0_1544830.1.CDS1"/>
    <property type="gene ID" value="TraesPARA_EIv1.0_1544830"/>
</dbReference>
<dbReference type="Gramene" id="TraesPARA_EIv1.0_1868860.1">
    <property type="protein sequence ID" value="TraesPARA_EIv1.0_1868860.1.CDS1"/>
    <property type="gene ID" value="TraesPARA_EIv1.0_1868860"/>
</dbReference>
<dbReference type="Gramene" id="TraesPARA_EIv1.0_2055660.1">
    <property type="protein sequence ID" value="TraesPARA_EIv1.0_2055660.1.CDS1"/>
    <property type="gene ID" value="TraesPARA_EIv1.0_2055660"/>
</dbReference>
<dbReference type="Gramene" id="TraesPARA_EIv1.0_2643890.1">
    <property type="protein sequence ID" value="TraesPARA_EIv1.0_2643890.1.CDS1"/>
    <property type="gene ID" value="TraesPARA_EIv1.0_2643890"/>
</dbReference>
<dbReference type="Gramene" id="TraesPARA_EIv1.0_2644110.1">
    <property type="protein sequence ID" value="TraesPARA_EIv1.0_2644110.1.CDS1"/>
    <property type="gene ID" value="TraesPARA_EIv1.0_2644110"/>
</dbReference>
<dbReference type="Gramene" id="TraesPARA_EIv1.0_2645600.1">
    <property type="protein sequence ID" value="TraesPARA_EIv1.0_2645600.1.CDS1"/>
    <property type="gene ID" value="TraesPARA_EIv1.0_2645600"/>
</dbReference>
<dbReference type="Gramene" id="TraesPARA_EIv1.0_2645730.1">
    <property type="protein sequence ID" value="TraesPARA_EIv1.0_2645730.1.CDS1"/>
    <property type="gene ID" value="TraesPARA_EIv1.0_2645730"/>
</dbReference>
<dbReference type="Gramene" id="TraesPARA_EIv1.0_2646880.1">
    <property type="protein sequence ID" value="TraesPARA_EIv1.0_2646880.1.CDS1"/>
    <property type="gene ID" value="TraesPARA_EIv1.0_2646880"/>
</dbReference>
<dbReference type="Gramene" id="TraesPARA_EIv1.0_2647040.1">
    <property type="protein sequence ID" value="TraesPARA_EIv1.0_2647040.1.CDS1"/>
    <property type="gene ID" value="TraesPARA_EIv1.0_2647040"/>
</dbReference>
<dbReference type="Gramene" id="TraesPARA_EIv1.0_2647420.1">
    <property type="protein sequence ID" value="TraesPARA_EIv1.0_2647420.1.CDS1"/>
    <property type="gene ID" value="TraesPARA_EIv1.0_2647420"/>
</dbReference>
<dbReference type="Gramene" id="TraesPARA_EIv1.0_2648570.1">
    <property type="protein sequence ID" value="TraesPARA_EIv1.0_2648570.1.CDS1"/>
    <property type="gene ID" value="TraesPARA_EIv1.0_2648570"/>
</dbReference>
<dbReference type="Gramene" id="TraesPARA_EIv1.0_2648680.1">
    <property type="protein sequence ID" value="TraesPARA_EIv1.0_2648680.1.CDS1"/>
    <property type="gene ID" value="TraesPARA_EIv1.0_2648680"/>
</dbReference>
<dbReference type="Gramene" id="TraesPARA_EIv1.0_2649390.1">
    <property type="protein sequence ID" value="TraesPARA_EIv1.0_2649390.1.CDS1"/>
    <property type="gene ID" value="TraesPARA_EIv1.0_2649390"/>
</dbReference>
<dbReference type="Gramene" id="TraesPARA_EIv1.0_2649640.1">
    <property type="protein sequence ID" value="TraesPARA_EIv1.0_2649640.1.CDS1"/>
    <property type="gene ID" value="TraesPARA_EIv1.0_2649640"/>
</dbReference>
<dbReference type="Gramene" id="TraesPARA_EIv1.0_2650600.1">
    <property type="protein sequence ID" value="TraesPARA_EIv1.0_2650600.1.CDS1"/>
    <property type="gene ID" value="TraesPARA_EIv1.0_2650600"/>
</dbReference>
<dbReference type="Gramene" id="TraesPARA_EIv1.0_2652300.1">
    <property type="protein sequence ID" value="TraesPARA_EIv1.0_2652300.1.CDS1"/>
    <property type="gene ID" value="TraesPARA_EIv1.0_2652300"/>
</dbReference>
<dbReference type="Gramene" id="TraesPARA_EIv1.0_2652580.1">
    <property type="protein sequence ID" value="TraesPARA_EIv1.0_2652580.1.CDS1"/>
    <property type="gene ID" value="TraesPARA_EIv1.0_2652580"/>
</dbReference>
<dbReference type="Gramene" id="TraesPARA_EIv1.0_2663140.1">
    <property type="protein sequence ID" value="TraesPARA_EIv1.0_2663140.1.CDS1"/>
    <property type="gene ID" value="TraesPARA_EIv1.0_2663140"/>
</dbReference>
<dbReference type="Gramene" id="TraesPARA_EIv1.0_2663540.1">
    <property type="protein sequence ID" value="TraesPARA_EIv1.0_2663540.1.CDS1"/>
    <property type="gene ID" value="TraesPARA_EIv1.0_2663540"/>
</dbReference>
<dbReference type="Gramene" id="TraesPARA_EIv1.0_2669540.1">
    <property type="protein sequence ID" value="TraesPARA_EIv1.0_2669540.1.CDS1"/>
    <property type="gene ID" value="TraesPARA_EIv1.0_2669540"/>
</dbReference>
<dbReference type="Gramene" id="TraesPARA_EIv1.0_2669560.1">
    <property type="protein sequence ID" value="TraesPARA_EIv1.0_2669560.1.CDS1"/>
    <property type="gene ID" value="TraesPARA_EIv1.0_2669560"/>
</dbReference>
<dbReference type="Gramene" id="TraesPARA_EIv1.0_2669970.1">
    <property type="protein sequence ID" value="TraesPARA_EIv1.0_2669970.1.CDS1"/>
    <property type="gene ID" value="TraesPARA_EIv1.0_2669970"/>
</dbReference>
<dbReference type="Gramene" id="TraesPARA_EIv1.0_2670090.1">
    <property type="protein sequence ID" value="TraesPARA_EIv1.0_2670090.1.CDS1"/>
    <property type="gene ID" value="TraesPARA_EIv1.0_2670090"/>
</dbReference>
<dbReference type="Gramene" id="TraesPARA_EIv1.0_2671470.1">
    <property type="protein sequence ID" value="TraesPARA_EIv1.0_2671470.1.CDS1"/>
    <property type="gene ID" value="TraesPARA_EIv1.0_2671470"/>
</dbReference>
<dbReference type="Gramene" id="TraesPARA_EIv1.0_2672190.1">
    <property type="protein sequence ID" value="TraesPARA_EIv1.0_2672190.1.CDS1"/>
    <property type="gene ID" value="TraesPARA_EIv1.0_2672190"/>
</dbReference>
<dbReference type="Gramene" id="TraesPARA_EIv1.0_2677510.1">
    <property type="protein sequence ID" value="TraesPARA_EIv1.0_2677510.1.CDS1"/>
    <property type="gene ID" value="TraesPARA_EIv1.0_2677510"/>
</dbReference>
<dbReference type="Gramene" id="TraesPARA_EIv1.0_2680100.1">
    <property type="protein sequence ID" value="TraesPARA_EIv1.0_2680100.1.CDS1"/>
    <property type="gene ID" value="TraesPARA_EIv1.0_2680100"/>
</dbReference>
<dbReference type="Gramene" id="TraesPARA_EIv1.0_2681180.1">
    <property type="protein sequence ID" value="TraesPARA_EIv1.0_2681180.1.CDS1"/>
    <property type="gene ID" value="TraesPARA_EIv1.0_2681180"/>
</dbReference>
<dbReference type="Gramene" id="TraesPARA_EIv1.0_2681720.1">
    <property type="protein sequence ID" value="TraesPARA_EIv1.0_2681720.1.CDS1"/>
    <property type="gene ID" value="TraesPARA_EIv1.0_2681720"/>
</dbReference>
<dbReference type="Gramene" id="TraesRN1D0100499000.1">
    <property type="protein sequence ID" value="TraesRN1D0100499000.1"/>
    <property type="gene ID" value="TraesRN1D0100499000"/>
</dbReference>
<dbReference type="Gramene" id="TraesRN1D0100499200.1">
    <property type="protein sequence ID" value="TraesRN1D0100499200.1"/>
    <property type="gene ID" value="TraesRN1D0100499200"/>
</dbReference>
<dbReference type="KEGG" id="taes:803205"/>
<dbReference type="eggNOG" id="KOG1353">
    <property type="taxonomic scope" value="Eukaryota"/>
</dbReference>
<dbReference type="HOGENOM" id="CLU_010091_2_1_1"/>
<dbReference type="Proteomes" id="UP000019116">
    <property type="component" value="Chloroplast"/>
</dbReference>
<dbReference type="ExpressionAtlas" id="P12112">
    <property type="expression patterns" value="baseline"/>
</dbReference>
<dbReference type="GO" id="GO:0009535">
    <property type="term" value="C:chloroplast thylakoid membrane"/>
    <property type="evidence" value="ECO:0007669"/>
    <property type="project" value="UniProtKB-SubCell"/>
</dbReference>
<dbReference type="GO" id="GO:0045259">
    <property type="term" value="C:proton-transporting ATP synthase complex"/>
    <property type="evidence" value="ECO:0007669"/>
    <property type="project" value="UniProtKB-KW"/>
</dbReference>
<dbReference type="GO" id="GO:0043531">
    <property type="term" value="F:ADP binding"/>
    <property type="evidence" value="ECO:0000318"/>
    <property type="project" value="GO_Central"/>
</dbReference>
<dbReference type="GO" id="GO:0005524">
    <property type="term" value="F:ATP binding"/>
    <property type="evidence" value="ECO:0000318"/>
    <property type="project" value="GO_Central"/>
</dbReference>
<dbReference type="GO" id="GO:0046933">
    <property type="term" value="F:proton-transporting ATP synthase activity, rotational mechanism"/>
    <property type="evidence" value="ECO:0007669"/>
    <property type="project" value="UniProtKB-UniRule"/>
</dbReference>
<dbReference type="GO" id="GO:0015986">
    <property type="term" value="P:proton motive force-driven ATP synthesis"/>
    <property type="evidence" value="ECO:0000318"/>
    <property type="project" value="GO_Central"/>
</dbReference>
<dbReference type="CDD" id="cd18113">
    <property type="entry name" value="ATP-synt_F1_alpha_C"/>
    <property type="match status" value="1"/>
</dbReference>
<dbReference type="CDD" id="cd18116">
    <property type="entry name" value="ATP-synt_F1_alpha_N"/>
    <property type="match status" value="1"/>
</dbReference>
<dbReference type="CDD" id="cd01132">
    <property type="entry name" value="F1-ATPase_alpha_CD"/>
    <property type="match status" value="1"/>
</dbReference>
<dbReference type="FunFam" id="1.20.150.20:FF:000001">
    <property type="entry name" value="ATP synthase subunit alpha"/>
    <property type="match status" value="1"/>
</dbReference>
<dbReference type="FunFam" id="2.40.30.20:FF:000001">
    <property type="entry name" value="ATP synthase subunit alpha"/>
    <property type="match status" value="1"/>
</dbReference>
<dbReference type="FunFam" id="3.40.50.300:FF:000002">
    <property type="entry name" value="ATP synthase subunit alpha"/>
    <property type="match status" value="1"/>
</dbReference>
<dbReference type="Gene3D" id="2.40.30.20">
    <property type="match status" value="1"/>
</dbReference>
<dbReference type="Gene3D" id="1.20.150.20">
    <property type="entry name" value="ATP synthase alpha/beta chain, C-terminal domain"/>
    <property type="match status" value="1"/>
</dbReference>
<dbReference type="Gene3D" id="3.40.50.300">
    <property type="entry name" value="P-loop containing nucleotide triphosphate hydrolases"/>
    <property type="match status" value="1"/>
</dbReference>
<dbReference type="HAMAP" id="MF_01346">
    <property type="entry name" value="ATP_synth_alpha_bact"/>
    <property type="match status" value="1"/>
</dbReference>
<dbReference type="InterPro" id="IPR023366">
    <property type="entry name" value="ATP_synth_asu-like_sf"/>
</dbReference>
<dbReference type="InterPro" id="IPR000793">
    <property type="entry name" value="ATP_synth_asu_C"/>
</dbReference>
<dbReference type="InterPro" id="IPR038376">
    <property type="entry name" value="ATP_synth_asu_C_sf"/>
</dbReference>
<dbReference type="InterPro" id="IPR033732">
    <property type="entry name" value="ATP_synth_F1_a_nt-bd_dom"/>
</dbReference>
<dbReference type="InterPro" id="IPR005294">
    <property type="entry name" value="ATP_synth_F1_asu"/>
</dbReference>
<dbReference type="InterPro" id="IPR020003">
    <property type="entry name" value="ATPase_a/bsu_AS"/>
</dbReference>
<dbReference type="InterPro" id="IPR004100">
    <property type="entry name" value="ATPase_F1/V1/A1_a/bsu_N"/>
</dbReference>
<dbReference type="InterPro" id="IPR036121">
    <property type="entry name" value="ATPase_F1/V1/A1_a/bsu_N_sf"/>
</dbReference>
<dbReference type="InterPro" id="IPR000194">
    <property type="entry name" value="ATPase_F1/V1/A1_a/bsu_nucl-bd"/>
</dbReference>
<dbReference type="InterPro" id="IPR027417">
    <property type="entry name" value="P-loop_NTPase"/>
</dbReference>
<dbReference type="NCBIfam" id="TIGR00962">
    <property type="entry name" value="atpA"/>
    <property type="match status" value="1"/>
</dbReference>
<dbReference type="NCBIfam" id="NF009884">
    <property type="entry name" value="PRK13343.1"/>
    <property type="match status" value="1"/>
</dbReference>
<dbReference type="PANTHER" id="PTHR48082:SF6">
    <property type="entry name" value="ATP SYNTHASE SUBUNIT ALPHA, CHLOROPLASTIC"/>
    <property type="match status" value="1"/>
</dbReference>
<dbReference type="PANTHER" id="PTHR48082">
    <property type="entry name" value="ATP SYNTHASE SUBUNIT ALPHA, MITOCHONDRIAL"/>
    <property type="match status" value="1"/>
</dbReference>
<dbReference type="Pfam" id="PF00006">
    <property type="entry name" value="ATP-synt_ab"/>
    <property type="match status" value="1"/>
</dbReference>
<dbReference type="Pfam" id="PF00306">
    <property type="entry name" value="ATP-synt_ab_C"/>
    <property type="match status" value="1"/>
</dbReference>
<dbReference type="Pfam" id="PF02874">
    <property type="entry name" value="ATP-synt_ab_N"/>
    <property type="match status" value="1"/>
</dbReference>
<dbReference type="PIRSF" id="PIRSF039088">
    <property type="entry name" value="F_ATPase_subunit_alpha"/>
    <property type="match status" value="1"/>
</dbReference>
<dbReference type="SUPFAM" id="SSF47917">
    <property type="entry name" value="C-terminal domain of alpha and beta subunits of F1 ATP synthase"/>
    <property type="match status" value="1"/>
</dbReference>
<dbReference type="SUPFAM" id="SSF50615">
    <property type="entry name" value="N-terminal domain of alpha and beta subunits of F1 ATP synthase"/>
    <property type="match status" value="1"/>
</dbReference>
<dbReference type="SUPFAM" id="SSF52540">
    <property type="entry name" value="P-loop containing nucleoside triphosphate hydrolases"/>
    <property type="match status" value="1"/>
</dbReference>
<dbReference type="PROSITE" id="PS00152">
    <property type="entry name" value="ATPASE_ALPHA_BETA"/>
    <property type="match status" value="1"/>
</dbReference>